<comment type="function">
    <text evidence="1">Cleaves beta-linked terminal galactosyl residues from gangliosides, glycoproteins, and glycosaminoglycans.</text>
</comment>
<comment type="catalytic activity">
    <reaction>
        <text>Hydrolysis of terminal non-reducing beta-D-galactose residues in beta-D-galactosides.</text>
        <dbReference type="EC" id="3.2.1.23"/>
    </reaction>
</comment>
<comment type="subcellular location">
    <subcellularLocation>
        <location evidence="1">Secreted</location>
    </subcellularLocation>
</comment>
<comment type="similarity">
    <text evidence="3">Belongs to the glycosyl hydrolase 35 family.</text>
</comment>
<name>BGALC_TALMQ</name>
<proteinExistence type="inferred from homology"/>
<reference key="1">
    <citation type="journal article" date="2015" name="Genome Announc.">
        <title>Genome sequence of the AIDS-associated pathogen Penicillium marneffei (ATCC18224) and its near taxonomic relative Talaromyces stipitatus (ATCC10500).</title>
        <authorList>
            <person name="Nierman W.C."/>
            <person name="Fedorova-Abrams N.D."/>
            <person name="Andrianopoulos A."/>
        </authorList>
    </citation>
    <scope>NUCLEOTIDE SEQUENCE [LARGE SCALE GENOMIC DNA]</scope>
    <source>
        <strain>ATCC 18224 / CBS 334.59 / QM 7333</strain>
    </source>
</reference>
<protein>
    <recommendedName>
        <fullName>Probable beta-galactosidase C</fullName>
        <ecNumber>3.2.1.23</ecNumber>
    </recommendedName>
    <alternativeName>
        <fullName>Lactase C</fullName>
    </alternativeName>
</protein>
<accession>B6QHA9</accession>
<organism>
    <name type="scientific">Talaromyces marneffei (strain ATCC 18224 / CBS 334.59 / QM 7333)</name>
    <name type="common">Penicillium marneffei</name>
    <dbReference type="NCBI Taxonomy" id="441960"/>
    <lineage>
        <taxon>Eukaryota</taxon>
        <taxon>Fungi</taxon>
        <taxon>Dikarya</taxon>
        <taxon>Ascomycota</taxon>
        <taxon>Pezizomycotina</taxon>
        <taxon>Eurotiomycetes</taxon>
        <taxon>Eurotiomycetidae</taxon>
        <taxon>Eurotiales</taxon>
        <taxon>Trichocomaceae</taxon>
        <taxon>Talaromyces</taxon>
        <taxon>Talaromyces sect. Talaromyces</taxon>
    </lineage>
</organism>
<dbReference type="EC" id="3.2.1.23"/>
<dbReference type="EMBL" id="DS995902">
    <property type="protein sequence ID" value="EEA22754.1"/>
    <property type="molecule type" value="Genomic_DNA"/>
</dbReference>
<dbReference type="RefSeq" id="XP_002148921.1">
    <property type="nucleotide sequence ID" value="XM_002148885.1"/>
</dbReference>
<dbReference type="SMR" id="B6QHA9"/>
<dbReference type="STRING" id="441960.B6QHA9"/>
<dbReference type="GlyCosmos" id="B6QHA9">
    <property type="glycosylation" value="13 sites, No reported glycans"/>
</dbReference>
<dbReference type="VEuPathDB" id="FungiDB:PMAA_093700"/>
<dbReference type="HOGENOM" id="CLU_005732_2_1_1"/>
<dbReference type="OrthoDB" id="1836at28568"/>
<dbReference type="PhylomeDB" id="B6QHA9"/>
<dbReference type="Proteomes" id="UP000001294">
    <property type="component" value="Unassembled WGS sequence"/>
</dbReference>
<dbReference type="GO" id="GO:0005576">
    <property type="term" value="C:extracellular region"/>
    <property type="evidence" value="ECO:0007669"/>
    <property type="project" value="UniProtKB-SubCell"/>
</dbReference>
<dbReference type="GO" id="GO:0004565">
    <property type="term" value="F:beta-galactosidase activity"/>
    <property type="evidence" value="ECO:0007669"/>
    <property type="project" value="UniProtKB-EC"/>
</dbReference>
<dbReference type="GO" id="GO:0000272">
    <property type="term" value="P:polysaccharide catabolic process"/>
    <property type="evidence" value="ECO:0007669"/>
    <property type="project" value="UniProtKB-KW"/>
</dbReference>
<dbReference type="FunFam" id="2.60.120.260:FF:000065">
    <property type="entry name" value="Beta-galactosidase A"/>
    <property type="match status" value="1"/>
</dbReference>
<dbReference type="FunFam" id="3.20.20.80:FF:000040">
    <property type="entry name" value="Beta-galactosidase A"/>
    <property type="match status" value="1"/>
</dbReference>
<dbReference type="Gene3D" id="2.102.20.10">
    <property type="entry name" value="Beta-galactosidase, domain 2"/>
    <property type="match status" value="1"/>
</dbReference>
<dbReference type="Gene3D" id="2.60.390.10">
    <property type="entry name" value="Beta-galactosidase, domain 3"/>
    <property type="match status" value="1"/>
</dbReference>
<dbReference type="Gene3D" id="2.60.120.260">
    <property type="entry name" value="Galactose-binding domain-like"/>
    <property type="match status" value="2"/>
</dbReference>
<dbReference type="Gene3D" id="3.20.20.80">
    <property type="entry name" value="Glycosidases"/>
    <property type="match status" value="1"/>
</dbReference>
<dbReference type="InterPro" id="IPR018954">
    <property type="entry name" value="Betagal_dom2"/>
</dbReference>
<dbReference type="InterPro" id="IPR037110">
    <property type="entry name" value="Betagal_dom2_sf"/>
</dbReference>
<dbReference type="InterPro" id="IPR025972">
    <property type="entry name" value="BetaGal_dom3"/>
</dbReference>
<dbReference type="InterPro" id="IPR036833">
    <property type="entry name" value="BetaGal_dom3_sf"/>
</dbReference>
<dbReference type="InterPro" id="IPR025300">
    <property type="entry name" value="BetaGal_jelly_roll_dom"/>
</dbReference>
<dbReference type="InterPro" id="IPR008979">
    <property type="entry name" value="Galactose-bd-like_sf"/>
</dbReference>
<dbReference type="InterPro" id="IPR031330">
    <property type="entry name" value="Gly_Hdrlase_35_cat"/>
</dbReference>
<dbReference type="InterPro" id="IPR001944">
    <property type="entry name" value="Glycoside_Hdrlase_35"/>
</dbReference>
<dbReference type="InterPro" id="IPR017853">
    <property type="entry name" value="Glycoside_hydrolase_SF"/>
</dbReference>
<dbReference type="PANTHER" id="PTHR23421">
    <property type="entry name" value="BETA-GALACTOSIDASE RELATED"/>
    <property type="match status" value="1"/>
</dbReference>
<dbReference type="Pfam" id="PF13364">
    <property type="entry name" value="BetaGal_ABD2"/>
    <property type="match status" value="2"/>
</dbReference>
<dbReference type="Pfam" id="PF10435">
    <property type="entry name" value="BetaGal_dom2"/>
    <property type="match status" value="1"/>
</dbReference>
<dbReference type="Pfam" id="PF13363">
    <property type="entry name" value="BetaGal_dom3"/>
    <property type="match status" value="1"/>
</dbReference>
<dbReference type="Pfam" id="PF01301">
    <property type="entry name" value="Glyco_hydro_35"/>
    <property type="match status" value="1"/>
</dbReference>
<dbReference type="PRINTS" id="PR00742">
    <property type="entry name" value="GLHYDRLASE35"/>
</dbReference>
<dbReference type="SMART" id="SM01029">
    <property type="entry name" value="BetaGal_dom2"/>
    <property type="match status" value="1"/>
</dbReference>
<dbReference type="SUPFAM" id="SSF51445">
    <property type="entry name" value="(Trans)glycosidases"/>
    <property type="match status" value="1"/>
</dbReference>
<dbReference type="SUPFAM" id="SSF117100">
    <property type="entry name" value="Beta-galactosidase LacA, domain 3"/>
    <property type="match status" value="1"/>
</dbReference>
<dbReference type="SUPFAM" id="SSF49785">
    <property type="entry name" value="Galactose-binding domain-like"/>
    <property type="match status" value="2"/>
</dbReference>
<dbReference type="SUPFAM" id="SSF51011">
    <property type="entry name" value="Glycosyl hydrolase domain"/>
    <property type="match status" value="1"/>
</dbReference>
<sequence>MFFFRFLTTVLLLFNAKLLVAQSSNTSSPVHWDKYSLSINGERLFVFAGEFHYIRLPVPELWLDVFQKLKANGFNAISVYFYWNHHSASEGVYDFETGGHNVQRLFDYAKQAGVYIIARPGPYANGELSAGGYALWAANGRLGGERTRDSQYYDLWSPWMTKIGKIIAANQITEGGPVILVQHENELQETTHRANNTLVLYMEQITQILDAAGIVVPSTHNEKGMRSMSWSMDYEDVGGAVNIYGLDSYPGGLSCTNPNAGFNLIRTYYQWFQNYSYTQPEYLAEFQGGYFTPWGGVFYDDCASMLQPEYADVFYKNNIGNRVTLQSLYMAYGGTNWGHIAAPVVYTSYDYSAPLRETREIRDKLKQTKLLGLFTRVSPDLLQTEMEGNGTSYTTGANIFTWALRNPETNAGFYVVAQDDSSSTTDVVFDLEVETSAGSVNITNIGLDGRQSKIITTDYKVGDTTLLYCSADILTYATLDVDVLALYLNKGQTGTFVLANAASHLKYTVYGNSTVTSSNSSQGTIYTYTQGQGISAIKFSNRFLVYLLDKYTAWDFFAPPLQLSDPNVKPNEHIFVIGPYLVREATIKGRTLELTGDNQNTTSIEIYHGNPFITSITWNGKHLSTKRTAYGSLTATIPGAEAITITLPKLTSWKSHDMIPEIDPEYDDSNWVVCNKTTSFNAIAPLSLPVLYSGDYGYHAGPKIYRGRFGSTNATGVTVTAQNGNAAGWSAWLNGIYIGGVTGDPSIEATSAVLKFNSSTTLKQEGSENVLTVLVDYTGHDEDNVKPARAQNPRGLLGVIFEGSTSTNFTSWKLQGNAGGEKNIDALRGPMNEGGFYGERLGWHLPGFEPSTKSGWDTRAPSDGVDGGSHRFYITEFTLDLGPNSHALDVPIGIHLNASSTSGPAVAYVWLNGYKFAHYLPHIGPQTVFPFQPGVLNIQGSEGHKRKNTLAVSLWALTDQPAALDVVELVAYGKYTSSFDFARDWSYLQPRWVDRSKYA</sequence>
<keyword id="KW-0119">Carbohydrate metabolism</keyword>
<keyword id="KW-1015">Disulfide bond</keyword>
<keyword id="KW-0325">Glycoprotein</keyword>
<keyword id="KW-0326">Glycosidase</keyword>
<keyword id="KW-0378">Hydrolase</keyword>
<keyword id="KW-0624">Polysaccharide degradation</keyword>
<keyword id="KW-1185">Reference proteome</keyword>
<keyword id="KW-0964">Secreted</keyword>
<keyword id="KW-0732">Signal</keyword>
<feature type="signal peptide" evidence="2">
    <location>
        <begin position="1"/>
        <end position="21"/>
    </location>
</feature>
<feature type="chain" id="PRO_0000395240" description="Probable beta-galactosidase C">
    <location>
        <begin position="22"/>
        <end position="999"/>
    </location>
</feature>
<feature type="active site" description="Proton donor" evidence="2">
    <location>
        <position position="186"/>
    </location>
</feature>
<feature type="active site" description="Nucleophile" evidence="2">
    <location>
        <position position="285"/>
    </location>
</feature>
<feature type="binding site" evidence="1">
    <location>
        <position position="80"/>
    </location>
    <ligand>
        <name>substrate</name>
    </ligand>
</feature>
<feature type="binding site" evidence="1">
    <location>
        <position position="125"/>
    </location>
    <ligand>
        <name>substrate</name>
    </ligand>
</feature>
<feature type="binding site" evidence="1">
    <location>
        <position position="127"/>
    </location>
    <ligand>
        <name>substrate</name>
    </ligand>
</feature>
<feature type="binding site" evidence="1">
    <location>
        <position position="185"/>
    </location>
    <ligand>
        <name>substrate</name>
    </ligand>
</feature>
<feature type="binding site" evidence="1">
    <location>
        <position position="249"/>
    </location>
    <ligand>
        <name>substrate</name>
    </ligand>
</feature>
<feature type="binding site" evidence="1">
    <location>
        <position position="351"/>
    </location>
    <ligand>
        <name>substrate</name>
    </ligand>
</feature>
<feature type="glycosylation site" description="N-linked (GlcNAc...) asparagine" evidence="2">
    <location>
        <position position="25"/>
    </location>
</feature>
<feature type="glycosylation site" description="N-linked (GlcNAc...) asparagine" evidence="2">
    <location>
        <position position="195"/>
    </location>
</feature>
<feature type="glycosylation site" description="N-linked (GlcNAc...) asparagine" evidence="2">
    <location>
        <position position="274"/>
    </location>
</feature>
<feature type="glycosylation site" description="N-linked (GlcNAc...) asparagine" evidence="2">
    <location>
        <position position="389"/>
    </location>
</feature>
<feature type="glycosylation site" description="N-linked (GlcNAc...) asparagine" evidence="2">
    <location>
        <position position="441"/>
    </location>
</feature>
<feature type="glycosylation site" description="N-linked (GlcNAc...) asparagine" evidence="2">
    <location>
        <position position="512"/>
    </location>
</feature>
<feature type="glycosylation site" description="N-linked (GlcNAc...) asparagine" evidence="2">
    <location>
        <position position="519"/>
    </location>
</feature>
<feature type="glycosylation site" description="N-linked (GlcNAc...) asparagine" evidence="2">
    <location>
        <position position="600"/>
    </location>
</feature>
<feature type="glycosylation site" description="N-linked (GlcNAc...) asparagine" evidence="2">
    <location>
        <position position="675"/>
    </location>
</feature>
<feature type="glycosylation site" description="N-linked (GlcNAc...) asparagine" evidence="2">
    <location>
        <position position="713"/>
    </location>
</feature>
<feature type="glycosylation site" description="N-linked (GlcNAc...) asparagine" evidence="2">
    <location>
        <position position="757"/>
    </location>
</feature>
<feature type="glycosylation site" description="N-linked (GlcNAc...) asparagine" evidence="2">
    <location>
        <position position="808"/>
    </location>
</feature>
<feature type="glycosylation site" description="N-linked (GlcNAc...) asparagine" evidence="2">
    <location>
        <position position="897"/>
    </location>
</feature>
<feature type="disulfide bond" evidence="1">
    <location>
        <begin position="255"/>
        <end position="302"/>
    </location>
</feature>
<gene>
    <name type="primary">lacC</name>
    <name type="ORF">PMAA_093700</name>
</gene>
<evidence type="ECO:0000250" key="1"/>
<evidence type="ECO:0000255" key="2"/>
<evidence type="ECO:0000305" key="3"/>